<proteinExistence type="inferred from homology"/>
<reference key="1">
    <citation type="journal article" date="2002" name="Nucleic Acids Res.">
        <title>Genome sequence of Oceanobacillus iheyensis isolated from the Iheya Ridge and its unexpected adaptive capabilities to extreme environments.</title>
        <authorList>
            <person name="Takami H."/>
            <person name="Takaki Y."/>
            <person name="Uchiyama I."/>
        </authorList>
    </citation>
    <scope>NUCLEOTIDE SEQUENCE [LARGE SCALE GENOMIC DNA]</scope>
    <source>
        <strain>DSM 14371 / CIP 107618 / JCM 11309 / KCTC 3954 / HTE831</strain>
    </source>
</reference>
<keyword id="KW-1185">Reference proteome</keyword>
<keyword id="KW-0687">Ribonucleoprotein</keyword>
<keyword id="KW-0689">Ribosomal protein</keyword>
<keyword id="KW-0694">RNA-binding</keyword>
<keyword id="KW-0699">rRNA-binding</keyword>
<sequence>MARYTGSVWKKSRRLGISLTGTGKELDKRPYAPGQHGPNQRRKLSEYGLQMQEKQKLRFMYGLNERQFRTLFDKAGKMKGIHGENFMILLESRLDNLVYRLGLARTRRQARQLVNHGHVTVDGGRVDIPSYAIKPGQVIGLREKSKNLDVVKEALEANSFVPEYTSFDADKMEGSYTRFPERSELPAEINEQLIVEFYSR</sequence>
<protein>
    <recommendedName>
        <fullName evidence="1">Small ribosomal subunit protein uS4</fullName>
    </recommendedName>
    <alternativeName>
        <fullName evidence="3">30S ribosomal protein S4</fullName>
    </alternativeName>
</protein>
<dbReference type="EMBL" id="BA000028">
    <property type="protein sequence ID" value="BAC14161.1"/>
    <property type="molecule type" value="Genomic_DNA"/>
</dbReference>
<dbReference type="RefSeq" id="WP_011066599.1">
    <property type="nucleotide sequence ID" value="NC_004193.1"/>
</dbReference>
<dbReference type="SMR" id="P59130"/>
<dbReference type="STRING" id="221109.gene:10734453"/>
<dbReference type="KEGG" id="oih:OB2205"/>
<dbReference type="eggNOG" id="COG0522">
    <property type="taxonomic scope" value="Bacteria"/>
</dbReference>
<dbReference type="HOGENOM" id="CLU_092403_0_1_9"/>
<dbReference type="OrthoDB" id="9803672at2"/>
<dbReference type="PhylomeDB" id="P59130"/>
<dbReference type="Proteomes" id="UP000000822">
    <property type="component" value="Chromosome"/>
</dbReference>
<dbReference type="GO" id="GO:0015935">
    <property type="term" value="C:small ribosomal subunit"/>
    <property type="evidence" value="ECO:0007669"/>
    <property type="project" value="InterPro"/>
</dbReference>
<dbReference type="GO" id="GO:0019843">
    <property type="term" value="F:rRNA binding"/>
    <property type="evidence" value="ECO:0007669"/>
    <property type="project" value="UniProtKB-UniRule"/>
</dbReference>
<dbReference type="GO" id="GO:0003735">
    <property type="term" value="F:structural constituent of ribosome"/>
    <property type="evidence" value="ECO:0007669"/>
    <property type="project" value="InterPro"/>
</dbReference>
<dbReference type="GO" id="GO:0042274">
    <property type="term" value="P:ribosomal small subunit biogenesis"/>
    <property type="evidence" value="ECO:0007669"/>
    <property type="project" value="TreeGrafter"/>
</dbReference>
<dbReference type="GO" id="GO:0006412">
    <property type="term" value="P:translation"/>
    <property type="evidence" value="ECO:0007669"/>
    <property type="project" value="UniProtKB-UniRule"/>
</dbReference>
<dbReference type="CDD" id="cd00165">
    <property type="entry name" value="S4"/>
    <property type="match status" value="1"/>
</dbReference>
<dbReference type="FunFam" id="1.10.1050.10:FF:000001">
    <property type="entry name" value="30S ribosomal protein S4"/>
    <property type="match status" value="1"/>
</dbReference>
<dbReference type="FunFam" id="3.10.290.10:FF:000001">
    <property type="entry name" value="30S ribosomal protein S4"/>
    <property type="match status" value="1"/>
</dbReference>
<dbReference type="Gene3D" id="1.10.1050.10">
    <property type="entry name" value="Ribosomal Protein S4 Delta 41, Chain A, domain 1"/>
    <property type="match status" value="1"/>
</dbReference>
<dbReference type="Gene3D" id="3.10.290.10">
    <property type="entry name" value="RNA-binding S4 domain"/>
    <property type="match status" value="1"/>
</dbReference>
<dbReference type="HAMAP" id="MF_01306_B">
    <property type="entry name" value="Ribosomal_uS4_B"/>
    <property type="match status" value="1"/>
</dbReference>
<dbReference type="InterPro" id="IPR022801">
    <property type="entry name" value="Ribosomal_uS4"/>
</dbReference>
<dbReference type="InterPro" id="IPR005709">
    <property type="entry name" value="Ribosomal_uS4_bac-type"/>
</dbReference>
<dbReference type="InterPro" id="IPR018079">
    <property type="entry name" value="Ribosomal_uS4_CS"/>
</dbReference>
<dbReference type="InterPro" id="IPR001912">
    <property type="entry name" value="Ribosomal_uS4_N"/>
</dbReference>
<dbReference type="InterPro" id="IPR002942">
    <property type="entry name" value="S4_RNA-bd"/>
</dbReference>
<dbReference type="InterPro" id="IPR036986">
    <property type="entry name" value="S4_RNA-bd_sf"/>
</dbReference>
<dbReference type="NCBIfam" id="NF003717">
    <property type="entry name" value="PRK05327.1"/>
    <property type="match status" value="1"/>
</dbReference>
<dbReference type="NCBIfam" id="TIGR01017">
    <property type="entry name" value="rpsD_bact"/>
    <property type="match status" value="1"/>
</dbReference>
<dbReference type="PANTHER" id="PTHR11831">
    <property type="entry name" value="30S 40S RIBOSOMAL PROTEIN"/>
    <property type="match status" value="1"/>
</dbReference>
<dbReference type="PANTHER" id="PTHR11831:SF4">
    <property type="entry name" value="SMALL RIBOSOMAL SUBUNIT PROTEIN US4M"/>
    <property type="match status" value="1"/>
</dbReference>
<dbReference type="Pfam" id="PF00163">
    <property type="entry name" value="Ribosomal_S4"/>
    <property type="match status" value="1"/>
</dbReference>
<dbReference type="Pfam" id="PF01479">
    <property type="entry name" value="S4"/>
    <property type="match status" value="1"/>
</dbReference>
<dbReference type="SMART" id="SM01390">
    <property type="entry name" value="Ribosomal_S4"/>
    <property type="match status" value="1"/>
</dbReference>
<dbReference type="SMART" id="SM00363">
    <property type="entry name" value="S4"/>
    <property type="match status" value="1"/>
</dbReference>
<dbReference type="SUPFAM" id="SSF55174">
    <property type="entry name" value="Alpha-L RNA-binding motif"/>
    <property type="match status" value="1"/>
</dbReference>
<dbReference type="PROSITE" id="PS00632">
    <property type="entry name" value="RIBOSOMAL_S4"/>
    <property type="match status" value="1"/>
</dbReference>
<dbReference type="PROSITE" id="PS50889">
    <property type="entry name" value="S4"/>
    <property type="match status" value="1"/>
</dbReference>
<organism>
    <name type="scientific">Oceanobacillus iheyensis (strain DSM 14371 / CIP 107618 / JCM 11309 / KCTC 3954 / HTE831)</name>
    <dbReference type="NCBI Taxonomy" id="221109"/>
    <lineage>
        <taxon>Bacteria</taxon>
        <taxon>Bacillati</taxon>
        <taxon>Bacillota</taxon>
        <taxon>Bacilli</taxon>
        <taxon>Bacillales</taxon>
        <taxon>Bacillaceae</taxon>
        <taxon>Oceanobacillus</taxon>
    </lineage>
</organism>
<name>RS4_OCEIH</name>
<comment type="function">
    <text evidence="1">One of the primary rRNA binding proteins, it binds directly to 16S rRNA where it nucleates assembly of the body of the 30S subunit.</text>
</comment>
<comment type="function">
    <text evidence="1">With S5 and S12 plays an important role in translational accuracy.</text>
</comment>
<comment type="subunit">
    <text evidence="1">Part of the 30S ribosomal subunit. Contacts protein S5. The interaction surface between S4 and S5 is involved in control of translational fidelity.</text>
</comment>
<comment type="similarity">
    <text evidence="1">Belongs to the universal ribosomal protein uS4 family.</text>
</comment>
<feature type="chain" id="PRO_0000132428" description="Small ribosomal subunit protein uS4">
    <location>
        <begin position="1"/>
        <end position="200"/>
    </location>
</feature>
<feature type="domain" description="S4 RNA-binding" evidence="1">
    <location>
        <begin position="92"/>
        <end position="152"/>
    </location>
</feature>
<feature type="region of interest" description="Disordered" evidence="2">
    <location>
        <begin position="20"/>
        <end position="41"/>
    </location>
</feature>
<accession>P59130</accession>
<gene>
    <name evidence="1" type="primary">rpsD</name>
    <name type="ordered locus">OB2205</name>
</gene>
<evidence type="ECO:0000255" key="1">
    <source>
        <dbReference type="HAMAP-Rule" id="MF_01306"/>
    </source>
</evidence>
<evidence type="ECO:0000256" key="2">
    <source>
        <dbReference type="SAM" id="MobiDB-lite"/>
    </source>
</evidence>
<evidence type="ECO:0000305" key="3"/>